<comment type="function">
    <text evidence="1">Cell wall formation.</text>
</comment>
<comment type="catalytic activity">
    <reaction evidence="1">
        <text>UDP-N-acetyl-alpha-D-muramate + NADP(+) = UDP-N-acetyl-3-O-(1-carboxyvinyl)-alpha-D-glucosamine + NADPH + H(+)</text>
        <dbReference type="Rhea" id="RHEA:12248"/>
        <dbReference type="ChEBI" id="CHEBI:15378"/>
        <dbReference type="ChEBI" id="CHEBI:57783"/>
        <dbReference type="ChEBI" id="CHEBI:58349"/>
        <dbReference type="ChEBI" id="CHEBI:68483"/>
        <dbReference type="ChEBI" id="CHEBI:70757"/>
        <dbReference type="EC" id="1.3.1.98"/>
    </reaction>
</comment>
<comment type="cofactor">
    <cofactor evidence="1">
        <name>FAD</name>
        <dbReference type="ChEBI" id="CHEBI:57692"/>
    </cofactor>
</comment>
<comment type="pathway">
    <text evidence="1">Cell wall biogenesis; peptidoglycan biosynthesis.</text>
</comment>
<comment type="subcellular location">
    <subcellularLocation>
        <location evidence="1">Cytoplasm</location>
    </subcellularLocation>
</comment>
<comment type="similarity">
    <text evidence="1">Belongs to the MurB family.</text>
</comment>
<gene>
    <name evidence="1" type="primary">murB</name>
    <name type="ordered locus">PEPE_0474</name>
</gene>
<accession>Q03GV3</accession>
<evidence type="ECO:0000255" key="1">
    <source>
        <dbReference type="HAMAP-Rule" id="MF_00037"/>
    </source>
</evidence>
<name>MURB_PEDPA</name>
<proteinExistence type="inferred from homology"/>
<protein>
    <recommendedName>
        <fullName evidence="1">UDP-N-acetylenolpyruvoylglucosamine reductase</fullName>
        <ecNumber evidence="1">1.3.1.98</ecNumber>
    </recommendedName>
    <alternativeName>
        <fullName evidence="1">UDP-N-acetylmuramate dehydrogenase</fullName>
    </alternativeName>
</protein>
<keyword id="KW-0131">Cell cycle</keyword>
<keyword id="KW-0132">Cell division</keyword>
<keyword id="KW-0133">Cell shape</keyword>
<keyword id="KW-0961">Cell wall biogenesis/degradation</keyword>
<keyword id="KW-0963">Cytoplasm</keyword>
<keyword id="KW-0274">FAD</keyword>
<keyword id="KW-0285">Flavoprotein</keyword>
<keyword id="KW-0521">NADP</keyword>
<keyword id="KW-0560">Oxidoreductase</keyword>
<keyword id="KW-0573">Peptidoglycan synthesis</keyword>
<dbReference type="EC" id="1.3.1.98" evidence="1"/>
<dbReference type="EMBL" id="CP000422">
    <property type="protein sequence ID" value="ABJ67569.1"/>
    <property type="molecule type" value="Genomic_DNA"/>
</dbReference>
<dbReference type="RefSeq" id="WP_002834046.1">
    <property type="nucleotide sequence ID" value="NC_008525.1"/>
</dbReference>
<dbReference type="SMR" id="Q03GV3"/>
<dbReference type="STRING" id="278197.PEPE_0474"/>
<dbReference type="GeneID" id="33062606"/>
<dbReference type="KEGG" id="ppe:PEPE_0474"/>
<dbReference type="eggNOG" id="COG0812">
    <property type="taxonomic scope" value="Bacteria"/>
</dbReference>
<dbReference type="HOGENOM" id="CLU_035304_1_1_9"/>
<dbReference type="OrthoDB" id="9804753at2"/>
<dbReference type="UniPathway" id="UPA00219"/>
<dbReference type="Proteomes" id="UP000000773">
    <property type="component" value="Chromosome"/>
</dbReference>
<dbReference type="GO" id="GO:0005829">
    <property type="term" value="C:cytosol"/>
    <property type="evidence" value="ECO:0007669"/>
    <property type="project" value="TreeGrafter"/>
</dbReference>
<dbReference type="GO" id="GO:0071949">
    <property type="term" value="F:FAD binding"/>
    <property type="evidence" value="ECO:0007669"/>
    <property type="project" value="InterPro"/>
</dbReference>
<dbReference type="GO" id="GO:0008762">
    <property type="term" value="F:UDP-N-acetylmuramate dehydrogenase activity"/>
    <property type="evidence" value="ECO:0007669"/>
    <property type="project" value="UniProtKB-UniRule"/>
</dbReference>
<dbReference type="GO" id="GO:0051301">
    <property type="term" value="P:cell division"/>
    <property type="evidence" value="ECO:0007669"/>
    <property type="project" value="UniProtKB-KW"/>
</dbReference>
<dbReference type="GO" id="GO:0071555">
    <property type="term" value="P:cell wall organization"/>
    <property type="evidence" value="ECO:0007669"/>
    <property type="project" value="UniProtKB-KW"/>
</dbReference>
<dbReference type="GO" id="GO:0009252">
    <property type="term" value="P:peptidoglycan biosynthetic process"/>
    <property type="evidence" value="ECO:0007669"/>
    <property type="project" value="UniProtKB-UniRule"/>
</dbReference>
<dbReference type="GO" id="GO:0008360">
    <property type="term" value="P:regulation of cell shape"/>
    <property type="evidence" value="ECO:0007669"/>
    <property type="project" value="UniProtKB-KW"/>
</dbReference>
<dbReference type="Gene3D" id="3.30.465.10">
    <property type="match status" value="1"/>
</dbReference>
<dbReference type="Gene3D" id="3.90.78.10">
    <property type="entry name" value="UDP-N-acetylenolpyruvoylglucosamine reductase, C-terminal domain"/>
    <property type="match status" value="1"/>
</dbReference>
<dbReference type="Gene3D" id="3.30.43.10">
    <property type="entry name" value="Uridine Diphospho-n-acetylenolpyruvylglucosamine Reductase, domain 2"/>
    <property type="match status" value="1"/>
</dbReference>
<dbReference type="HAMAP" id="MF_00037">
    <property type="entry name" value="MurB"/>
    <property type="match status" value="1"/>
</dbReference>
<dbReference type="InterPro" id="IPR016166">
    <property type="entry name" value="FAD-bd_PCMH"/>
</dbReference>
<dbReference type="InterPro" id="IPR036318">
    <property type="entry name" value="FAD-bd_PCMH-like_sf"/>
</dbReference>
<dbReference type="InterPro" id="IPR016167">
    <property type="entry name" value="FAD-bd_PCMH_sub1"/>
</dbReference>
<dbReference type="InterPro" id="IPR016169">
    <property type="entry name" value="FAD-bd_PCMH_sub2"/>
</dbReference>
<dbReference type="InterPro" id="IPR003170">
    <property type="entry name" value="MurB"/>
</dbReference>
<dbReference type="InterPro" id="IPR011601">
    <property type="entry name" value="MurB_C"/>
</dbReference>
<dbReference type="InterPro" id="IPR036635">
    <property type="entry name" value="MurB_C_sf"/>
</dbReference>
<dbReference type="InterPro" id="IPR006094">
    <property type="entry name" value="Oxid_FAD_bind_N"/>
</dbReference>
<dbReference type="NCBIfam" id="TIGR00179">
    <property type="entry name" value="murB"/>
    <property type="match status" value="1"/>
</dbReference>
<dbReference type="NCBIfam" id="NF010480">
    <property type="entry name" value="PRK13905.1"/>
    <property type="match status" value="1"/>
</dbReference>
<dbReference type="PANTHER" id="PTHR21071">
    <property type="entry name" value="UDP-N-ACETYLENOLPYRUVOYLGLUCOSAMINE REDUCTASE"/>
    <property type="match status" value="1"/>
</dbReference>
<dbReference type="PANTHER" id="PTHR21071:SF4">
    <property type="entry name" value="UDP-N-ACETYLENOLPYRUVOYLGLUCOSAMINE REDUCTASE"/>
    <property type="match status" value="1"/>
</dbReference>
<dbReference type="Pfam" id="PF01565">
    <property type="entry name" value="FAD_binding_4"/>
    <property type="match status" value="1"/>
</dbReference>
<dbReference type="Pfam" id="PF02873">
    <property type="entry name" value="MurB_C"/>
    <property type="match status" value="1"/>
</dbReference>
<dbReference type="SUPFAM" id="SSF56176">
    <property type="entry name" value="FAD-binding/transporter-associated domain-like"/>
    <property type="match status" value="1"/>
</dbReference>
<dbReference type="SUPFAM" id="SSF56194">
    <property type="entry name" value="Uridine diphospho-N-Acetylenolpyruvylglucosamine reductase, MurB, C-terminal domain"/>
    <property type="match status" value="1"/>
</dbReference>
<dbReference type="PROSITE" id="PS51387">
    <property type="entry name" value="FAD_PCMH"/>
    <property type="match status" value="1"/>
</dbReference>
<organism>
    <name type="scientific">Pediococcus pentosaceus (strain ATCC 25745 / CCUG 21536 / LMG 10740 / 183-1w)</name>
    <dbReference type="NCBI Taxonomy" id="278197"/>
    <lineage>
        <taxon>Bacteria</taxon>
        <taxon>Bacillati</taxon>
        <taxon>Bacillota</taxon>
        <taxon>Bacilli</taxon>
        <taxon>Lactobacillales</taxon>
        <taxon>Lactobacillaceae</taxon>
        <taxon>Pediococcus</taxon>
    </lineage>
</organism>
<sequence>MMDQSIADAFPEVQVLEHEPLSKYTNTQTGGPADLLVFPESVTETKRLVLWAKETDTPLTIIGNASNLIVRDGGIRGLTLILTKMDDIQVNGNEVVAEAGAALIQTTEVAYQAGLTGLEFAAGIPGSIGGAVFMNAGAYDGEISEVVTSAEILTRDGEIKNLNNHELDFGYRHSSVQDYQDVVLSATFKLRSGDANKIRARMDELNRLRASKQPLEYPSCGSVFKRPTGYFTGKLIHEAGLQGFTVGGAQVSMKHAGFIINVGGATATDYMDVIHHVQATVLKQFGVTLETEVRIIGEEK</sequence>
<feature type="chain" id="PRO_1000002900" description="UDP-N-acetylenolpyruvoylglucosamine reductase">
    <location>
        <begin position="1"/>
        <end position="300"/>
    </location>
</feature>
<feature type="domain" description="FAD-binding PCMH-type" evidence="1">
    <location>
        <begin position="29"/>
        <end position="193"/>
    </location>
</feature>
<feature type="active site" evidence="1">
    <location>
        <position position="172"/>
    </location>
</feature>
<feature type="active site" description="Proton donor" evidence="1">
    <location>
        <position position="222"/>
    </location>
</feature>
<feature type="active site" evidence="1">
    <location>
        <position position="292"/>
    </location>
</feature>
<reference key="1">
    <citation type="journal article" date="2006" name="Proc. Natl. Acad. Sci. U.S.A.">
        <title>Comparative genomics of the lactic acid bacteria.</title>
        <authorList>
            <person name="Makarova K.S."/>
            <person name="Slesarev A."/>
            <person name="Wolf Y.I."/>
            <person name="Sorokin A."/>
            <person name="Mirkin B."/>
            <person name="Koonin E.V."/>
            <person name="Pavlov A."/>
            <person name="Pavlova N."/>
            <person name="Karamychev V."/>
            <person name="Polouchine N."/>
            <person name="Shakhova V."/>
            <person name="Grigoriev I."/>
            <person name="Lou Y."/>
            <person name="Rohksar D."/>
            <person name="Lucas S."/>
            <person name="Huang K."/>
            <person name="Goodstein D.M."/>
            <person name="Hawkins T."/>
            <person name="Plengvidhya V."/>
            <person name="Welker D."/>
            <person name="Hughes J."/>
            <person name="Goh Y."/>
            <person name="Benson A."/>
            <person name="Baldwin K."/>
            <person name="Lee J.-H."/>
            <person name="Diaz-Muniz I."/>
            <person name="Dosti B."/>
            <person name="Smeianov V."/>
            <person name="Wechter W."/>
            <person name="Barabote R."/>
            <person name="Lorca G."/>
            <person name="Altermann E."/>
            <person name="Barrangou R."/>
            <person name="Ganesan B."/>
            <person name="Xie Y."/>
            <person name="Rawsthorne H."/>
            <person name="Tamir D."/>
            <person name="Parker C."/>
            <person name="Breidt F."/>
            <person name="Broadbent J.R."/>
            <person name="Hutkins R."/>
            <person name="O'Sullivan D."/>
            <person name="Steele J."/>
            <person name="Unlu G."/>
            <person name="Saier M.H. Jr."/>
            <person name="Klaenhammer T."/>
            <person name="Richardson P."/>
            <person name="Kozyavkin S."/>
            <person name="Weimer B.C."/>
            <person name="Mills D.A."/>
        </authorList>
    </citation>
    <scope>NUCLEOTIDE SEQUENCE [LARGE SCALE GENOMIC DNA]</scope>
    <source>
        <strain>ATCC 25745 / CCUG 21536 / LMG 10740 / 183-1w</strain>
    </source>
</reference>